<accession>B2K7F8</accession>
<name>SYGB_YERPB</name>
<gene>
    <name evidence="1" type="primary">glyS</name>
    <name type="ordered locus">YPTS_4134</name>
</gene>
<dbReference type="EC" id="6.1.1.14" evidence="1"/>
<dbReference type="EMBL" id="CP001048">
    <property type="protein sequence ID" value="ACC91080.1"/>
    <property type="molecule type" value="Genomic_DNA"/>
</dbReference>
<dbReference type="RefSeq" id="WP_002209623.1">
    <property type="nucleotide sequence ID" value="NZ_CP009780.1"/>
</dbReference>
<dbReference type="SMR" id="B2K7F8"/>
<dbReference type="GeneID" id="57974645"/>
<dbReference type="KEGG" id="ypb:YPTS_4134"/>
<dbReference type="PATRIC" id="fig|502801.10.peg.3609"/>
<dbReference type="GO" id="GO:0005829">
    <property type="term" value="C:cytosol"/>
    <property type="evidence" value="ECO:0007669"/>
    <property type="project" value="TreeGrafter"/>
</dbReference>
<dbReference type="GO" id="GO:0004814">
    <property type="term" value="F:arginine-tRNA ligase activity"/>
    <property type="evidence" value="ECO:0007669"/>
    <property type="project" value="InterPro"/>
</dbReference>
<dbReference type="GO" id="GO:0005524">
    <property type="term" value="F:ATP binding"/>
    <property type="evidence" value="ECO:0007669"/>
    <property type="project" value="UniProtKB-UniRule"/>
</dbReference>
<dbReference type="GO" id="GO:0004820">
    <property type="term" value="F:glycine-tRNA ligase activity"/>
    <property type="evidence" value="ECO:0007669"/>
    <property type="project" value="UniProtKB-UniRule"/>
</dbReference>
<dbReference type="GO" id="GO:0006420">
    <property type="term" value="P:arginyl-tRNA aminoacylation"/>
    <property type="evidence" value="ECO:0007669"/>
    <property type="project" value="InterPro"/>
</dbReference>
<dbReference type="GO" id="GO:0006426">
    <property type="term" value="P:glycyl-tRNA aminoacylation"/>
    <property type="evidence" value="ECO:0007669"/>
    <property type="project" value="UniProtKB-UniRule"/>
</dbReference>
<dbReference type="HAMAP" id="MF_00255">
    <property type="entry name" value="Gly_tRNA_synth_beta"/>
    <property type="match status" value="1"/>
</dbReference>
<dbReference type="InterPro" id="IPR008909">
    <property type="entry name" value="DALR_anticod-bd"/>
</dbReference>
<dbReference type="InterPro" id="IPR015944">
    <property type="entry name" value="Gly-tRNA-synth_bsu"/>
</dbReference>
<dbReference type="InterPro" id="IPR006194">
    <property type="entry name" value="Gly-tRNA-synth_heterodimer"/>
</dbReference>
<dbReference type="NCBIfam" id="TIGR00211">
    <property type="entry name" value="glyS"/>
    <property type="match status" value="1"/>
</dbReference>
<dbReference type="PANTHER" id="PTHR30075:SF2">
    <property type="entry name" value="GLYCINE--TRNA LIGASE, CHLOROPLASTIC_MITOCHONDRIAL 2"/>
    <property type="match status" value="1"/>
</dbReference>
<dbReference type="PANTHER" id="PTHR30075">
    <property type="entry name" value="GLYCYL-TRNA SYNTHETASE"/>
    <property type="match status" value="1"/>
</dbReference>
<dbReference type="Pfam" id="PF05746">
    <property type="entry name" value="DALR_1"/>
    <property type="match status" value="1"/>
</dbReference>
<dbReference type="Pfam" id="PF02092">
    <property type="entry name" value="tRNA_synt_2f"/>
    <property type="match status" value="1"/>
</dbReference>
<dbReference type="PRINTS" id="PR01045">
    <property type="entry name" value="TRNASYNTHGB"/>
</dbReference>
<dbReference type="SUPFAM" id="SSF109604">
    <property type="entry name" value="HD-domain/PDEase-like"/>
    <property type="match status" value="1"/>
</dbReference>
<dbReference type="PROSITE" id="PS50861">
    <property type="entry name" value="AA_TRNA_LIGASE_II_GLYAB"/>
    <property type="match status" value="1"/>
</dbReference>
<feature type="chain" id="PRO_1000101374" description="Glycine--tRNA ligase beta subunit">
    <location>
        <begin position="1"/>
        <end position="689"/>
    </location>
</feature>
<protein>
    <recommendedName>
        <fullName evidence="1">Glycine--tRNA ligase beta subunit</fullName>
        <ecNumber evidence="1">6.1.1.14</ecNumber>
    </recommendedName>
    <alternativeName>
        <fullName evidence="1">Glycyl-tRNA synthetase beta subunit</fullName>
        <shortName evidence="1">GlyRS</shortName>
    </alternativeName>
</protein>
<keyword id="KW-0030">Aminoacyl-tRNA synthetase</keyword>
<keyword id="KW-0067">ATP-binding</keyword>
<keyword id="KW-0963">Cytoplasm</keyword>
<keyword id="KW-0436">Ligase</keyword>
<keyword id="KW-0547">Nucleotide-binding</keyword>
<keyword id="KW-0648">Protein biosynthesis</keyword>
<sequence length="689" mass="76204">MTQQTFLVEIGTEELPPKALRSLAESFAANFTAELDNANLSHGEVSWYAAPRRLAVKVANLSAAQADREVEKRGPAIAQAFDAEGKPSKAAEGWARGCGITVDQAERLVTDKGEWLLYRAHVKGQPAQLLLAGMVNTALSKLPIPKLMRWGDKETQFVRPVHTVTLLLGTEVIPGTVLGINSDRVIRGHRFMGEAEFTIDSADQYPQILLERGKVIADYELRKSIIKRDAEQAAQQIGGVADLSESLLEEVASLVEWPVVLTAKFEEKFLAVPAEALVYTMKGDQKYFPVYDTAGHLMPHFIFVANIESKDPQQIISGNEKVVRPRLADAEFFFKTDRKKRLEDNLPRLETVLFQQQLGTLRDKTDRIQALAGWVAAQIGADVNHATRAGLLSKCDLMTNMVFEFTDTQGVMGMHYARHDGEAEDVAVALNEQYQPRFAGDDLPSNPVACALAIADKMDTLAGIFGIGQHPKGDKDPFALRRAALGVLRIIVEKNLSLDLQTLTEEAVRLYGSKLTNAKVVDDVIEFMLGRFRAWYQDEGHSVDTIQAVLARRPTKPADFDARVKAVTYFRTLDAAAALAAANKRVSNILAKSTDTLNDHVHASILKEPAELKLATHLVVLRDQLEPVFAAGQYKEALVELAALRETVDEFFESVMVMAEDDAVRVNRLTLLSKLRELFLQVADISLLQ</sequence>
<evidence type="ECO:0000255" key="1">
    <source>
        <dbReference type="HAMAP-Rule" id="MF_00255"/>
    </source>
</evidence>
<reference key="1">
    <citation type="submission" date="2008-04" db="EMBL/GenBank/DDBJ databases">
        <title>Complete sequence of Yersinia pseudotuberculosis PB1/+.</title>
        <authorList>
            <person name="Copeland A."/>
            <person name="Lucas S."/>
            <person name="Lapidus A."/>
            <person name="Glavina del Rio T."/>
            <person name="Dalin E."/>
            <person name="Tice H."/>
            <person name="Bruce D."/>
            <person name="Goodwin L."/>
            <person name="Pitluck S."/>
            <person name="Munk A.C."/>
            <person name="Brettin T."/>
            <person name="Detter J.C."/>
            <person name="Han C."/>
            <person name="Tapia R."/>
            <person name="Schmutz J."/>
            <person name="Larimer F."/>
            <person name="Land M."/>
            <person name="Hauser L."/>
            <person name="Challacombe J.F."/>
            <person name="Green L."/>
            <person name="Lindler L.E."/>
            <person name="Nikolich M.P."/>
            <person name="Richardson P."/>
        </authorList>
    </citation>
    <scope>NUCLEOTIDE SEQUENCE [LARGE SCALE GENOMIC DNA]</scope>
    <source>
        <strain>PB1/+</strain>
    </source>
</reference>
<proteinExistence type="inferred from homology"/>
<comment type="catalytic activity">
    <reaction evidence="1">
        <text>tRNA(Gly) + glycine + ATP = glycyl-tRNA(Gly) + AMP + diphosphate</text>
        <dbReference type="Rhea" id="RHEA:16013"/>
        <dbReference type="Rhea" id="RHEA-COMP:9664"/>
        <dbReference type="Rhea" id="RHEA-COMP:9683"/>
        <dbReference type="ChEBI" id="CHEBI:30616"/>
        <dbReference type="ChEBI" id="CHEBI:33019"/>
        <dbReference type="ChEBI" id="CHEBI:57305"/>
        <dbReference type="ChEBI" id="CHEBI:78442"/>
        <dbReference type="ChEBI" id="CHEBI:78522"/>
        <dbReference type="ChEBI" id="CHEBI:456215"/>
        <dbReference type="EC" id="6.1.1.14"/>
    </reaction>
</comment>
<comment type="subunit">
    <text evidence="1">Tetramer of two alpha and two beta subunits.</text>
</comment>
<comment type="subcellular location">
    <subcellularLocation>
        <location evidence="1">Cytoplasm</location>
    </subcellularLocation>
</comment>
<comment type="similarity">
    <text evidence="1">Belongs to the class-II aminoacyl-tRNA synthetase family.</text>
</comment>
<organism>
    <name type="scientific">Yersinia pseudotuberculosis serotype IB (strain PB1/+)</name>
    <dbReference type="NCBI Taxonomy" id="502801"/>
    <lineage>
        <taxon>Bacteria</taxon>
        <taxon>Pseudomonadati</taxon>
        <taxon>Pseudomonadota</taxon>
        <taxon>Gammaproteobacteria</taxon>
        <taxon>Enterobacterales</taxon>
        <taxon>Yersiniaceae</taxon>
        <taxon>Yersinia</taxon>
    </lineage>
</organism>